<accession>Q1R382</accession>
<protein>
    <recommendedName>
        <fullName evidence="1">HTH-type transcriptional repressor NsrR</fullName>
    </recommendedName>
</protein>
<evidence type="ECO:0000255" key="1">
    <source>
        <dbReference type="HAMAP-Rule" id="MF_01177"/>
    </source>
</evidence>
<name>NSRR_ECOUT</name>
<organism>
    <name type="scientific">Escherichia coli (strain UTI89 / UPEC)</name>
    <dbReference type="NCBI Taxonomy" id="364106"/>
    <lineage>
        <taxon>Bacteria</taxon>
        <taxon>Pseudomonadati</taxon>
        <taxon>Pseudomonadota</taxon>
        <taxon>Gammaproteobacteria</taxon>
        <taxon>Enterobacterales</taxon>
        <taxon>Enterobacteriaceae</taxon>
        <taxon>Escherichia</taxon>
    </lineage>
</organism>
<feature type="chain" id="PRO_0000268940" description="HTH-type transcriptional repressor NsrR">
    <location>
        <begin position="1"/>
        <end position="141"/>
    </location>
</feature>
<feature type="domain" description="HTH rrf2-type" evidence="1">
    <location>
        <begin position="2"/>
        <end position="129"/>
    </location>
</feature>
<feature type="DNA-binding region" description="H-T-H motif" evidence="1">
    <location>
        <begin position="28"/>
        <end position="51"/>
    </location>
</feature>
<feature type="binding site" evidence="1">
    <location>
        <position position="91"/>
    </location>
    <ligand>
        <name>[2Fe-2S] cluster</name>
        <dbReference type="ChEBI" id="CHEBI:190135"/>
    </ligand>
</feature>
<feature type="binding site" evidence="1">
    <location>
        <position position="96"/>
    </location>
    <ligand>
        <name>[2Fe-2S] cluster</name>
        <dbReference type="ChEBI" id="CHEBI:190135"/>
    </ligand>
</feature>
<feature type="binding site" evidence="1">
    <location>
        <position position="102"/>
    </location>
    <ligand>
        <name>[2Fe-2S] cluster</name>
        <dbReference type="ChEBI" id="CHEBI:190135"/>
    </ligand>
</feature>
<proteinExistence type="inferred from homology"/>
<dbReference type="EMBL" id="CP000243">
    <property type="protein sequence ID" value="ABE10182.1"/>
    <property type="molecule type" value="Genomic_DNA"/>
</dbReference>
<dbReference type="RefSeq" id="WP_001177639.1">
    <property type="nucleotide sequence ID" value="NZ_CP064825.1"/>
</dbReference>
<dbReference type="SMR" id="Q1R382"/>
<dbReference type="GeneID" id="93777643"/>
<dbReference type="KEGG" id="eci:UTI89_C4778"/>
<dbReference type="HOGENOM" id="CLU_107144_2_1_6"/>
<dbReference type="Proteomes" id="UP000001952">
    <property type="component" value="Chromosome"/>
</dbReference>
<dbReference type="GO" id="GO:0005829">
    <property type="term" value="C:cytosol"/>
    <property type="evidence" value="ECO:0007669"/>
    <property type="project" value="TreeGrafter"/>
</dbReference>
<dbReference type="GO" id="GO:0051537">
    <property type="term" value="F:2 iron, 2 sulfur cluster binding"/>
    <property type="evidence" value="ECO:0007669"/>
    <property type="project" value="UniProtKB-KW"/>
</dbReference>
<dbReference type="GO" id="GO:0003700">
    <property type="term" value="F:DNA-binding transcription factor activity"/>
    <property type="evidence" value="ECO:0007669"/>
    <property type="project" value="UniProtKB-UniRule"/>
</dbReference>
<dbReference type="GO" id="GO:0003690">
    <property type="term" value="F:double-stranded DNA binding"/>
    <property type="evidence" value="ECO:0007669"/>
    <property type="project" value="UniProtKB-UniRule"/>
</dbReference>
<dbReference type="GO" id="GO:0005506">
    <property type="term" value="F:iron ion binding"/>
    <property type="evidence" value="ECO:0007669"/>
    <property type="project" value="UniProtKB-UniRule"/>
</dbReference>
<dbReference type="GO" id="GO:0045892">
    <property type="term" value="P:negative regulation of DNA-templated transcription"/>
    <property type="evidence" value="ECO:0007669"/>
    <property type="project" value="InterPro"/>
</dbReference>
<dbReference type="FunFam" id="1.10.10.10:FF:000105">
    <property type="entry name" value="HTH-type transcriptional repressor NsrR"/>
    <property type="match status" value="1"/>
</dbReference>
<dbReference type="Gene3D" id="1.10.10.10">
    <property type="entry name" value="Winged helix-like DNA-binding domain superfamily/Winged helix DNA-binding domain"/>
    <property type="match status" value="1"/>
</dbReference>
<dbReference type="HAMAP" id="MF_01177">
    <property type="entry name" value="HTH_type_NsrR"/>
    <property type="match status" value="1"/>
</dbReference>
<dbReference type="InterPro" id="IPR030489">
    <property type="entry name" value="TR_Rrf2-type_CS"/>
</dbReference>
<dbReference type="InterPro" id="IPR000944">
    <property type="entry name" value="Tscrpt_reg_Rrf2"/>
</dbReference>
<dbReference type="InterPro" id="IPR023761">
    <property type="entry name" value="Tscrpt_rep_HTH_NsrR"/>
</dbReference>
<dbReference type="InterPro" id="IPR036388">
    <property type="entry name" value="WH-like_DNA-bd_sf"/>
</dbReference>
<dbReference type="InterPro" id="IPR036390">
    <property type="entry name" value="WH_DNA-bd_sf"/>
</dbReference>
<dbReference type="NCBIfam" id="NF008240">
    <property type="entry name" value="PRK11014.1"/>
    <property type="match status" value="1"/>
</dbReference>
<dbReference type="NCBIfam" id="TIGR00738">
    <property type="entry name" value="rrf2_super"/>
    <property type="match status" value="1"/>
</dbReference>
<dbReference type="PANTHER" id="PTHR33221:SF4">
    <property type="entry name" value="HTH-TYPE TRANSCRIPTIONAL REPRESSOR NSRR"/>
    <property type="match status" value="1"/>
</dbReference>
<dbReference type="PANTHER" id="PTHR33221">
    <property type="entry name" value="WINGED HELIX-TURN-HELIX TRANSCRIPTIONAL REGULATOR, RRF2 FAMILY"/>
    <property type="match status" value="1"/>
</dbReference>
<dbReference type="Pfam" id="PF02082">
    <property type="entry name" value="Rrf2"/>
    <property type="match status" value="1"/>
</dbReference>
<dbReference type="SUPFAM" id="SSF46785">
    <property type="entry name" value="Winged helix' DNA-binding domain"/>
    <property type="match status" value="1"/>
</dbReference>
<dbReference type="PROSITE" id="PS01332">
    <property type="entry name" value="HTH_RRF2_1"/>
    <property type="match status" value="1"/>
</dbReference>
<dbReference type="PROSITE" id="PS51197">
    <property type="entry name" value="HTH_RRF2_2"/>
    <property type="match status" value="1"/>
</dbReference>
<reference key="1">
    <citation type="journal article" date="2006" name="Proc. Natl. Acad. Sci. U.S.A.">
        <title>Identification of genes subject to positive selection in uropathogenic strains of Escherichia coli: a comparative genomics approach.</title>
        <authorList>
            <person name="Chen S.L."/>
            <person name="Hung C.-S."/>
            <person name="Xu J."/>
            <person name="Reigstad C.S."/>
            <person name="Magrini V."/>
            <person name="Sabo A."/>
            <person name="Blasiar D."/>
            <person name="Bieri T."/>
            <person name="Meyer R.R."/>
            <person name="Ozersky P."/>
            <person name="Armstrong J.R."/>
            <person name="Fulton R.S."/>
            <person name="Latreille J.P."/>
            <person name="Spieth J."/>
            <person name="Hooton T.M."/>
            <person name="Mardis E.R."/>
            <person name="Hultgren S.J."/>
            <person name="Gordon J.I."/>
        </authorList>
    </citation>
    <scope>NUCLEOTIDE SEQUENCE [LARGE SCALE GENOMIC DNA]</scope>
    <source>
        <strain>UTI89 / UPEC</strain>
    </source>
</reference>
<sequence>MQLTSFTDYGLRALIYMASLPEGRMTSISEVTDVYGVSRNHMVKIINQLSRAGYVTAVRGKNGGIRLGKPASAIRIGDVVRELEPLSLVNCSSEFCHITPACRLKQALSKAVQSFLTELDNYTLADLVEENQPLYKLLLVE</sequence>
<keyword id="KW-0001">2Fe-2S</keyword>
<keyword id="KW-0238">DNA-binding</keyword>
<keyword id="KW-0408">Iron</keyword>
<keyword id="KW-0411">Iron-sulfur</keyword>
<keyword id="KW-0479">Metal-binding</keyword>
<keyword id="KW-0678">Repressor</keyword>
<keyword id="KW-0804">Transcription</keyword>
<keyword id="KW-0805">Transcription regulation</keyword>
<comment type="function">
    <text evidence="1">Nitric oxide-sensitive repressor of genes involved in protecting the cell against nitrosative stress. May require iron for activity.</text>
</comment>
<comment type="cofactor">
    <cofactor evidence="1">
        <name>[2Fe-2S] cluster</name>
        <dbReference type="ChEBI" id="CHEBI:190135"/>
    </cofactor>
    <text evidence="1">Binds 1 [2Fe-2S] cluster per subunit.</text>
</comment>
<gene>
    <name evidence="1" type="primary">nsrR</name>
    <name type="ordered locus">UTI89_C4778</name>
</gene>